<dbReference type="EC" id="4.1.1.23" evidence="1"/>
<dbReference type="EMBL" id="CU928160">
    <property type="protein sequence ID" value="CAQ98163.1"/>
    <property type="molecule type" value="Genomic_DNA"/>
</dbReference>
<dbReference type="RefSeq" id="WP_000176278.1">
    <property type="nucleotide sequence ID" value="NC_011741.1"/>
</dbReference>
<dbReference type="SMR" id="B7LY40"/>
<dbReference type="GeneID" id="93775404"/>
<dbReference type="KEGG" id="ecr:ECIAI1_1304"/>
<dbReference type="HOGENOM" id="CLU_067069_0_0_6"/>
<dbReference type="UniPathway" id="UPA00070">
    <property type="reaction ID" value="UER00120"/>
</dbReference>
<dbReference type="GO" id="GO:0005829">
    <property type="term" value="C:cytosol"/>
    <property type="evidence" value="ECO:0007669"/>
    <property type="project" value="TreeGrafter"/>
</dbReference>
<dbReference type="GO" id="GO:0004590">
    <property type="term" value="F:orotidine-5'-phosphate decarboxylase activity"/>
    <property type="evidence" value="ECO:0007669"/>
    <property type="project" value="UniProtKB-UniRule"/>
</dbReference>
<dbReference type="GO" id="GO:0006207">
    <property type="term" value="P:'de novo' pyrimidine nucleobase biosynthetic process"/>
    <property type="evidence" value="ECO:0007669"/>
    <property type="project" value="InterPro"/>
</dbReference>
<dbReference type="GO" id="GO:0044205">
    <property type="term" value="P:'de novo' UMP biosynthetic process"/>
    <property type="evidence" value="ECO:0007669"/>
    <property type="project" value="UniProtKB-UniRule"/>
</dbReference>
<dbReference type="CDD" id="cd04725">
    <property type="entry name" value="OMP_decarboxylase_like"/>
    <property type="match status" value="1"/>
</dbReference>
<dbReference type="FunFam" id="3.20.20.70:FF:000015">
    <property type="entry name" value="Orotidine 5'-phosphate decarboxylase"/>
    <property type="match status" value="1"/>
</dbReference>
<dbReference type="Gene3D" id="3.20.20.70">
    <property type="entry name" value="Aldolase class I"/>
    <property type="match status" value="1"/>
</dbReference>
<dbReference type="HAMAP" id="MF_01200_B">
    <property type="entry name" value="OMPdecase_type1_B"/>
    <property type="match status" value="1"/>
</dbReference>
<dbReference type="InterPro" id="IPR013785">
    <property type="entry name" value="Aldolase_TIM"/>
</dbReference>
<dbReference type="InterPro" id="IPR014732">
    <property type="entry name" value="OMPdecase"/>
</dbReference>
<dbReference type="InterPro" id="IPR018089">
    <property type="entry name" value="OMPdecase_AS"/>
</dbReference>
<dbReference type="InterPro" id="IPR047596">
    <property type="entry name" value="OMPdecase_bac"/>
</dbReference>
<dbReference type="InterPro" id="IPR001754">
    <property type="entry name" value="OMPdeCOase_dom"/>
</dbReference>
<dbReference type="InterPro" id="IPR011060">
    <property type="entry name" value="RibuloseP-bd_barrel"/>
</dbReference>
<dbReference type="NCBIfam" id="NF001273">
    <property type="entry name" value="PRK00230.1"/>
    <property type="match status" value="1"/>
</dbReference>
<dbReference type="NCBIfam" id="TIGR01740">
    <property type="entry name" value="pyrF"/>
    <property type="match status" value="1"/>
</dbReference>
<dbReference type="PANTHER" id="PTHR32119">
    <property type="entry name" value="OROTIDINE 5'-PHOSPHATE DECARBOXYLASE"/>
    <property type="match status" value="1"/>
</dbReference>
<dbReference type="PANTHER" id="PTHR32119:SF2">
    <property type="entry name" value="OROTIDINE 5'-PHOSPHATE DECARBOXYLASE"/>
    <property type="match status" value="1"/>
</dbReference>
<dbReference type="Pfam" id="PF00215">
    <property type="entry name" value="OMPdecase"/>
    <property type="match status" value="1"/>
</dbReference>
<dbReference type="SMART" id="SM00934">
    <property type="entry name" value="OMPdecase"/>
    <property type="match status" value="1"/>
</dbReference>
<dbReference type="SUPFAM" id="SSF51366">
    <property type="entry name" value="Ribulose-phoshate binding barrel"/>
    <property type="match status" value="1"/>
</dbReference>
<dbReference type="PROSITE" id="PS00156">
    <property type="entry name" value="OMPDECASE"/>
    <property type="match status" value="1"/>
</dbReference>
<proteinExistence type="inferred from homology"/>
<sequence length="245" mass="26366">MTLTASSSSRAVTNSPVVVALDYHNRDDALSFVDKIDPRDCRLKVGKEMFTLFGPQFVRELQQRGFDIFLDLKFHDIPNTAAHAVAAAADLGVWMVNVHASGGARMMTAAREALVPFGKDAPLLIAVTVLTSMEASDLVDLGMTLSPADYAERLAALTQKCGLDGVVCSAQEAVRFKQVFGQEFKLVTPGIRPQGSEAGDQRRIMTPEQALSAGVDYMVIGRPVTQSVDPAQTLKAINASLQRSA</sequence>
<organism>
    <name type="scientific">Escherichia coli O8 (strain IAI1)</name>
    <dbReference type="NCBI Taxonomy" id="585034"/>
    <lineage>
        <taxon>Bacteria</taxon>
        <taxon>Pseudomonadati</taxon>
        <taxon>Pseudomonadota</taxon>
        <taxon>Gammaproteobacteria</taxon>
        <taxon>Enterobacterales</taxon>
        <taxon>Enterobacteriaceae</taxon>
        <taxon>Escherichia</taxon>
    </lineage>
</organism>
<reference key="1">
    <citation type="journal article" date="2009" name="PLoS Genet.">
        <title>Organised genome dynamics in the Escherichia coli species results in highly diverse adaptive paths.</title>
        <authorList>
            <person name="Touchon M."/>
            <person name="Hoede C."/>
            <person name="Tenaillon O."/>
            <person name="Barbe V."/>
            <person name="Baeriswyl S."/>
            <person name="Bidet P."/>
            <person name="Bingen E."/>
            <person name="Bonacorsi S."/>
            <person name="Bouchier C."/>
            <person name="Bouvet O."/>
            <person name="Calteau A."/>
            <person name="Chiapello H."/>
            <person name="Clermont O."/>
            <person name="Cruveiller S."/>
            <person name="Danchin A."/>
            <person name="Diard M."/>
            <person name="Dossat C."/>
            <person name="Karoui M.E."/>
            <person name="Frapy E."/>
            <person name="Garry L."/>
            <person name="Ghigo J.M."/>
            <person name="Gilles A.M."/>
            <person name="Johnson J."/>
            <person name="Le Bouguenec C."/>
            <person name="Lescat M."/>
            <person name="Mangenot S."/>
            <person name="Martinez-Jehanne V."/>
            <person name="Matic I."/>
            <person name="Nassif X."/>
            <person name="Oztas S."/>
            <person name="Petit M.A."/>
            <person name="Pichon C."/>
            <person name="Rouy Z."/>
            <person name="Ruf C.S."/>
            <person name="Schneider D."/>
            <person name="Tourret J."/>
            <person name="Vacherie B."/>
            <person name="Vallenet D."/>
            <person name="Medigue C."/>
            <person name="Rocha E.P.C."/>
            <person name="Denamur E."/>
        </authorList>
    </citation>
    <scope>NUCLEOTIDE SEQUENCE [LARGE SCALE GENOMIC DNA]</scope>
    <source>
        <strain>IAI1</strain>
    </source>
</reference>
<feature type="chain" id="PRO_1000138524" description="Orotidine 5'-phosphate decarboxylase">
    <location>
        <begin position="1"/>
        <end position="245"/>
    </location>
</feature>
<feature type="active site" description="Proton donor" evidence="1">
    <location>
        <position position="73"/>
    </location>
</feature>
<feature type="binding site" evidence="1">
    <location>
        <position position="22"/>
    </location>
    <ligand>
        <name>substrate</name>
    </ligand>
</feature>
<feature type="binding site" evidence="1">
    <location>
        <position position="44"/>
    </location>
    <ligand>
        <name>substrate</name>
    </ligand>
</feature>
<feature type="binding site" evidence="1">
    <location>
        <begin position="71"/>
        <end position="80"/>
    </location>
    <ligand>
        <name>substrate</name>
    </ligand>
</feature>
<feature type="binding site" evidence="1">
    <location>
        <position position="131"/>
    </location>
    <ligand>
        <name>substrate</name>
    </ligand>
</feature>
<feature type="binding site" evidence="1">
    <location>
        <position position="192"/>
    </location>
    <ligand>
        <name>substrate</name>
    </ligand>
</feature>
<feature type="binding site" evidence="1">
    <location>
        <position position="201"/>
    </location>
    <ligand>
        <name>substrate</name>
    </ligand>
</feature>
<feature type="binding site" evidence="1">
    <location>
        <position position="221"/>
    </location>
    <ligand>
        <name>substrate</name>
    </ligand>
</feature>
<feature type="binding site" evidence="1">
    <location>
        <position position="222"/>
    </location>
    <ligand>
        <name>substrate</name>
    </ligand>
</feature>
<accession>B7LY40</accession>
<evidence type="ECO:0000255" key="1">
    <source>
        <dbReference type="HAMAP-Rule" id="MF_01200"/>
    </source>
</evidence>
<protein>
    <recommendedName>
        <fullName evidence="1">Orotidine 5'-phosphate decarboxylase</fullName>
        <ecNumber evidence="1">4.1.1.23</ecNumber>
    </recommendedName>
    <alternativeName>
        <fullName evidence="1">OMP decarboxylase</fullName>
        <shortName evidence="1">OMPDCase</shortName>
        <shortName evidence="1">OMPdecase</shortName>
    </alternativeName>
</protein>
<keyword id="KW-0210">Decarboxylase</keyword>
<keyword id="KW-0456">Lyase</keyword>
<keyword id="KW-0665">Pyrimidine biosynthesis</keyword>
<name>PYRF_ECO8A</name>
<comment type="function">
    <text evidence="1">Catalyzes the decarboxylation of orotidine 5'-monophosphate (OMP) to uridine 5'-monophosphate (UMP).</text>
</comment>
<comment type="catalytic activity">
    <reaction evidence="1">
        <text>orotidine 5'-phosphate + H(+) = UMP + CO2</text>
        <dbReference type="Rhea" id="RHEA:11596"/>
        <dbReference type="ChEBI" id="CHEBI:15378"/>
        <dbReference type="ChEBI" id="CHEBI:16526"/>
        <dbReference type="ChEBI" id="CHEBI:57538"/>
        <dbReference type="ChEBI" id="CHEBI:57865"/>
        <dbReference type="EC" id="4.1.1.23"/>
    </reaction>
</comment>
<comment type="pathway">
    <text evidence="1">Pyrimidine metabolism; UMP biosynthesis via de novo pathway; UMP from orotate: step 2/2.</text>
</comment>
<comment type="subunit">
    <text evidence="1">Homodimer.</text>
</comment>
<comment type="similarity">
    <text evidence="1">Belongs to the OMP decarboxylase family. Type 1 subfamily.</text>
</comment>
<gene>
    <name evidence="1" type="primary">pyrF</name>
    <name type="ordered locus">ECIAI1_1304</name>
</gene>